<gene>
    <name evidence="1" type="primary">plsX</name>
    <name type="ordered locus">RSc1049</name>
    <name type="ORF">RS04184</name>
</gene>
<keyword id="KW-0963">Cytoplasm</keyword>
<keyword id="KW-0444">Lipid biosynthesis</keyword>
<keyword id="KW-0443">Lipid metabolism</keyword>
<keyword id="KW-0594">Phospholipid biosynthesis</keyword>
<keyword id="KW-1208">Phospholipid metabolism</keyword>
<keyword id="KW-1185">Reference proteome</keyword>
<keyword id="KW-0808">Transferase</keyword>
<evidence type="ECO:0000255" key="1">
    <source>
        <dbReference type="HAMAP-Rule" id="MF_00019"/>
    </source>
</evidence>
<accession>Q8Y0J5</accession>
<organism>
    <name type="scientific">Ralstonia nicotianae (strain ATCC BAA-1114 / GMI1000)</name>
    <name type="common">Ralstonia solanacearum</name>
    <dbReference type="NCBI Taxonomy" id="267608"/>
    <lineage>
        <taxon>Bacteria</taxon>
        <taxon>Pseudomonadati</taxon>
        <taxon>Pseudomonadota</taxon>
        <taxon>Betaproteobacteria</taxon>
        <taxon>Burkholderiales</taxon>
        <taxon>Burkholderiaceae</taxon>
        <taxon>Ralstonia</taxon>
        <taxon>Ralstonia solanacearum species complex</taxon>
    </lineage>
</organism>
<dbReference type="EC" id="2.3.1.274" evidence="1"/>
<dbReference type="EMBL" id="AL646052">
    <property type="protein sequence ID" value="CAD14751.1"/>
    <property type="molecule type" value="Genomic_DNA"/>
</dbReference>
<dbReference type="RefSeq" id="WP_011001001.1">
    <property type="nucleotide sequence ID" value="NC_003295.1"/>
</dbReference>
<dbReference type="SMR" id="Q8Y0J5"/>
<dbReference type="STRING" id="267608.RSc1049"/>
<dbReference type="EnsemblBacteria" id="CAD14751">
    <property type="protein sequence ID" value="CAD14751"/>
    <property type="gene ID" value="RSc1049"/>
</dbReference>
<dbReference type="KEGG" id="rso:RSc1049"/>
<dbReference type="eggNOG" id="COG0416">
    <property type="taxonomic scope" value="Bacteria"/>
</dbReference>
<dbReference type="HOGENOM" id="CLU_039379_1_0_4"/>
<dbReference type="UniPathway" id="UPA00085"/>
<dbReference type="Proteomes" id="UP000001436">
    <property type="component" value="Chromosome"/>
</dbReference>
<dbReference type="GO" id="GO:0005737">
    <property type="term" value="C:cytoplasm"/>
    <property type="evidence" value="ECO:0007669"/>
    <property type="project" value="UniProtKB-SubCell"/>
</dbReference>
<dbReference type="GO" id="GO:0043811">
    <property type="term" value="F:phosphate:acyl-[acyl carrier protein] acyltransferase activity"/>
    <property type="evidence" value="ECO:0007669"/>
    <property type="project" value="UniProtKB-UniRule"/>
</dbReference>
<dbReference type="GO" id="GO:0006633">
    <property type="term" value="P:fatty acid biosynthetic process"/>
    <property type="evidence" value="ECO:0007669"/>
    <property type="project" value="UniProtKB-UniRule"/>
</dbReference>
<dbReference type="GO" id="GO:0008654">
    <property type="term" value="P:phospholipid biosynthetic process"/>
    <property type="evidence" value="ECO:0007669"/>
    <property type="project" value="UniProtKB-KW"/>
</dbReference>
<dbReference type="Gene3D" id="3.40.718.10">
    <property type="entry name" value="Isopropylmalate Dehydrogenase"/>
    <property type="match status" value="1"/>
</dbReference>
<dbReference type="HAMAP" id="MF_00019">
    <property type="entry name" value="PlsX"/>
    <property type="match status" value="1"/>
</dbReference>
<dbReference type="InterPro" id="IPR003664">
    <property type="entry name" value="FA_synthesis"/>
</dbReference>
<dbReference type="InterPro" id="IPR012281">
    <property type="entry name" value="Phospholipid_synth_PlsX-like"/>
</dbReference>
<dbReference type="NCBIfam" id="TIGR00182">
    <property type="entry name" value="plsX"/>
    <property type="match status" value="1"/>
</dbReference>
<dbReference type="PANTHER" id="PTHR30100">
    <property type="entry name" value="FATTY ACID/PHOSPHOLIPID SYNTHESIS PROTEIN PLSX"/>
    <property type="match status" value="1"/>
</dbReference>
<dbReference type="PANTHER" id="PTHR30100:SF1">
    <property type="entry name" value="PHOSPHATE ACYLTRANSFERASE"/>
    <property type="match status" value="1"/>
</dbReference>
<dbReference type="Pfam" id="PF02504">
    <property type="entry name" value="FA_synthesis"/>
    <property type="match status" value="1"/>
</dbReference>
<dbReference type="PIRSF" id="PIRSF002465">
    <property type="entry name" value="Phsphlp_syn_PlsX"/>
    <property type="match status" value="1"/>
</dbReference>
<dbReference type="SUPFAM" id="SSF53659">
    <property type="entry name" value="Isocitrate/Isopropylmalate dehydrogenase-like"/>
    <property type="match status" value="1"/>
</dbReference>
<name>PLSX_RALN1</name>
<comment type="function">
    <text evidence="1">Catalyzes the reversible formation of acyl-phosphate (acyl-PO(4)) from acyl-[acyl-carrier-protein] (acyl-ACP). This enzyme utilizes acyl-ACP as fatty acyl donor, but not acyl-CoA.</text>
</comment>
<comment type="catalytic activity">
    <reaction evidence="1">
        <text>a fatty acyl-[ACP] + phosphate = an acyl phosphate + holo-[ACP]</text>
        <dbReference type="Rhea" id="RHEA:42292"/>
        <dbReference type="Rhea" id="RHEA-COMP:9685"/>
        <dbReference type="Rhea" id="RHEA-COMP:14125"/>
        <dbReference type="ChEBI" id="CHEBI:43474"/>
        <dbReference type="ChEBI" id="CHEBI:59918"/>
        <dbReference type="ChEBI" id="CHEBI:64479"/>
        <dbReference type="ChEBI" id="CHEBI:138651"/>
        <dbReference type="EC" id="2.3.1.274"/>
    </reaction>
</comment>
<comment type="pathway">
    <text evidence="1">Lipid metabolism; phospholipid metabolism.</text>
</comment>
<comment type="subunit">
    <text evidence="1">Homodimer. Probably interacts with PlsY.</text>
</comment>
<comment type="subcellular location">
    <subcellularLocation>
        <location evidence="1">Cytoplasm</location>
    </subcellularLocation>
    <text evidence="1">Associated with the membrane possibly through PlsY.</text>
</comment>
<comment type="similarity">
    <text evidence="1">Belongs to the PlsX family.</text>
</comment>
<reference key="1">
    <citation type="journal article" date="2002" name="Nature">
        <title>Genome sequence of the plant pathogen Ralstonia solanacearum.</title>
        <authorList>
            <person name="Salanoubat M."/>
            <person name="Genin S."/>
            <person name="Artiguenave F."/>
            <person name="Gouzy J."/>
            <person name="Mangenot S."/>
            <person name="Arlat M."/>
            <person name="Billault A."/>
            <person name="Brottier P."/>
            <person name="Camus J.-C."/>
            <person name="Cattolico L."/>
            <person name="Chandler M."/>
            <person name="Choisne N."/>
            <person name="Claudel-Renard C."/>
            <person name="Cunnac S."/>
            <person name="Demange N."/>
            <person name="Gaspin C."/>
            <person name="Lavie M."/>
            <person name="Moisan A."/>
            <person name="Robert C."/>
            <person name="Saurin W."/>
            <person name="Schiex T."/>
            <person name="Siguier P."/>
            <person name="Thebault P."/>
            <person name="Whalen M."/>
            <person name="Wincker P."/>
            <person name="Levy M."/>
            <person name="Weissenbach J."/>
            <person name="Boucher C.A."/>
        </authorList>
    </citation>
    <scope>NUCLEOTIDE SEQUENCE [LARGE SCALE GENOMIC DNA]</scope>
    <source>
        <strain>ATCC BAA-1114 / GMI1000</strain>
    </source>
</reference>
<feature type="chain" id="PRO_0000189925" description="Phosphate acyltransferase">
    <location>
        <begin position="1"/>
        <end position="354"/>
    </location>
</feature>
<sequence>MTIKLAIDCMGGDHGVAVTIPAAIQFLAAHEDVEMLLVGQPDVIAAELKRLHATAHSRIHVVAASEVVSMDDPVEVALRKKKDSSMRVAIKQVKDGAAQACVSAGNTGALMAVSRYVLKTLDGIDRPAIATAIPNEKGAGTTVLDLGANADCEPAHLLQFAQMASAMVSVVEHKPRPTVGLLNIGEEVIKGNEVVKQAGELLRASDLNFFGNVEGNDIFKGTTDIVVCDGFVGNVALKSTEGLAKMIGAMLREEFSRSWFTKLLAIVALPVLTRFKRRVDHRRYNGAALLGLRGLVIKSHGSADAYAFEWAIKRAYDAAANGVIARIAQAFESHHDPAGAAVPLSTSAPAADAA</sequence>
<protein>
    <recommendedName>
        <fullName evidence="1">Phosphate acyltransferase</fullName>
        <ecNumber evidence="1">2.3.1.274</ecNumber>
    </recommendedName>
    <alternativeName>
        <fullName evidence="1">Acyl-ACP phosphotransacylase</fullName>
    </alternativeName>
    <alternativeName>
        <fullName evidence="1">Acyl-[acyl-carrier-protein]--phosphate acyltransferase</fullName>
    </alternativeName>
    <alternativeName>
        <fullName evidence="1">Phosphate-acyl-ACP acyltransferase</fullName>
    </alternativeName>
</protein>
<proteinExistence type="inferred from homology"/>